<gene>
    <name evidence="1" type="primary">dnaK</name>
    <name type="ordered locus">APJL_1953</name>
</gene>
<protein>
    <recommendedName>
        <fullName evidence="1">Chaperone protein DnaK</fullName>
    </recommendedName>
    <alternativeName>
        <fullName evidence="1">HSP70</fullName>
    </alternativeName>
    <alternativeName>
        <fullName evidence="1">Heat shock 70 kDa protein</fullName>
    </alternativeName>
    <alternativeName>
        <fullName evidence="1">Heat shock protein 70</fullName>
    </alternativeName>
</protein>
<comment type="function">
    <text evidence="1">Acts as a chaperone.</text>
</comment>
<comment type="induction">
    <text evidence="1">By stress conditions e.g. heat shock.</text>
</comment>
<comment type="similarity">
    <text evidence="1">Belongs to the heat shock protein 70 family.</text>
</comment>
<proteinExistence type="inferred from homology"/>
<accession>B0BTI7</accession>
<dbReference type="EMBL" id="CP000687">
    <property type="protein sequence ID" value="ABY70501.1"/>
    <property type="molecule type" value="Genomic_DNA"/>
</dbReference>
<dbReference type="RefSeq" id="WP_005605999.1">
    <property type="nucleotide sequence ID" value="NC_010278.1"/>
</dbReference>
<dbReference type="SMR" id="B0BTI7"/>
<dbReference type="KEGG" id="apj:APJL_1953"/>
<dbReference type="HOGENOM" id="CLU_005965_2_1_6"/>
<dbReference type="Proteomes" id="UP000008547">
    <property type="component" value="Chromosome"/>
</dbReference>
<dbReference type="GO" id="GO:0005524">
    <property type="term" value="F:ATP binding"/>
    <property type="evidence" value="ECO:0007669"/>
    <property type="project" value="UniProtKB-UniRule"/>
</dbReference>
<dbReference type="GO" id="GO:0140662">
    <property type="term" value="F:ATP-dependent protein folding chaperone"/>
    <property type="evidence" value="ECO:0007669"/>
    <property type="project" value="InterPro"/>
</dbReference>
<dbReference type="GO" id="GO:0051082">
    <property type="term" value="F:unfolded protein binding"/>
    <property type="evidence" value="ECO:0007669"/>
    <property type="project" value="InterPro"/>
</dbReference>
<dbReference type="CDD" id="cd10234">
    <property type="entry name" value="ASKHA_NBD_HSP70_DnaK-like"/>
    <property type="match status" value="1"/>
</dbReference>
<dbReference type="FunFam" id="2.60.34.10:FF:000014">
    <property type="entry name" value="Chaperone protein DnaK HSP70"/>
    <property type="match status" value="1"/>
</dbReference>
<dbReference type="FunFam" id="1.20.1270.10:FF:000001">
    <property type="entry name" value="Molecular chaperone DnaK"/>
    <property type="match status" value="1"/>
</dbReference>
<dbReference type="FunFam" id="3.30.420.40:FF:000004">
    <property type="entry name" value="Molecular chaperone DnaK"/>
    <property type="match status" value="1"/>
</dbReference>
<dbReference type="FunFam" id="3.90.640.10:FF:000003">
    <property type="entry name" value="Molecular chaperone DnaK"/>
    <property type="match status" value="1"/>
</dbReference>
<dbReference type="Gene3D" id="1.20.1270.10">
    <property type="match status" value="1"/>
</dbReference>
<dbReference type="Gene3D" id="3.30.420.40">
    <property type="match status" value="2"/>
</dbReference>
<dbReference type="Gene3D" id="3.90.640.10">
    <property type="entry name" value="Actin, Chain A, domain 4"/>
    <property type="match status" value="1"/>
</dbReference>
<dbReference type="Gene3D" id="2.60.34.10">
    <property type="entry name" value="Substrate Binding Domain Of DNAk, Chain A, domain 1"/>
    <property type="match status" value="1"/>
</dbReference>
<dbReference type="HAMAP" id="MF_00332">
    <property type="entry name" value="DnaK"/>
    <property type="match status" value="1"/>
</dbReference>
<dbReference type="InterPro" id="IPR043129">
    <property type="entry name" value="ATPase_NBD"/>
</dbReference>
<dbReference type="InterPro" id="IPR012725">
    <property type="entry name" value="Chaperone_DnaK"/>
</dbReference>
<dbReference type="InterPro" id="IPR018181">
    <property type="entry name" value="Heat_shock_70_CS"/>
</dbReference>
<dbReference type="InterPro" id="IPR029048">
    <property type="entry name" value="HSP70_C_sf"/>
</dbReference>
<dbReference type="InterPro" id="IPR029047">
    <property type="entry name" value="HSP70_peptide-bd_sf"/>
</dbReference>
<dbReference type="InterPro" id="IPR013126">
    <property type="entry name" value="Hsp_70_fam"/>
</dbReference>
<dbReference type="NCBIfam" id="NF001413">
    <property type="entry name" value="PRK00290.1"/>
    <property type="match status" value="1"/>
</dbReference>
<dbReference type="NCBIfam" id="TIGR02350">
    <property type="entry name" value="prok_dnaK"/>
    <property type="match status" value="1"/>
</dbReference>
<dbReference type="PANTHER" id="PTHR19375">
    <property type="entry name" value="HEAT SHOCK PROTEIN 70KDA"/>
    <property type="match status" value="1"/>
</dbReference>
<dbReference type="Pfam" id="PF00012">
    <property type="entry name" value="HSP70"/>
    <property type="match status" value="1"/>
</dbReference>
<dbReference type="PRINTS" id="PR00301">
    <property type="entry name" value="HEATSHOCK70"/>
</dbReference>
<dbReference type="SUPFAM" id="SSF53067">
    <property type="entry name" value="Actin-like ATPase domain"/>
    <property type="match status" value="2"/>
</dbReference>
<dbReference type="SUPFAM" id="SSF100934">
    <property type="entry name" value="Heat shock protein 70kD (HSP70), C-terminal subdomain"/>
    <property type="match status" value="1"/>
</dbReference>
<dbReference type="SUPFAM" id="SSF100920">
    <property type="entry name" value="Heat shock protein 70kD (HSP70), peptide-binding domain"/>
    <property type="match status" value="1"/>
</dbReference>
<dbReference type="PROSITE" id="PS00297">
    <property type="entry name" value="HSP70_1"/>
    <property type="match status" value="1"/>
</dbReference>
<dbReference type="PROSITE" id="PS00329">
    <property type="entry name" value="HSP70_2"/>
    <property type="match status" value="1"/>
</dbReference>
<dbReference type="PROSITE" id="PS01036">
    <property type="entry name" value="HSP70_3"/>
    <property type="match status" value="1"/>
</dbReference>
<keyword id="KW-0067">ATP-binding</keyword>
<keyword id="KW-0143">Chaperone</keyword>
<keyword id="KW-0547">Nucleotide-binding</keyword>
<keyword id="KW-0597">Phosphoprotein</keyword>
<keyword id="KW-0346">Stress response</keyword>
<organism>
    <name type="scientific">Actinobacillus pleuropneumoniae serotype 3 (strain JL03)</name>
    <dbReference type="NCBI Taxonomy" id="434271"/>
    <lineage>
        <taxon>Bacteria</taxon>
        <taxon>Pseudomonadati</taxon>
        <taxon>Pseudomonadota</taxon>
        <taxon>Gammaproteobacteria</taxon>
        <taxon>Pasteurellales</taxon>
        <taxon>Pasteurellaceae</taxon>
        <taxon>Actinobacillus</taxon>
    </lineage>
</organism>
<evidence type="ECO:0000255" key="1">
    <source>
        <dbReference type="HAMAP-Rule" id="MF_00332"/>
    </source>
</evidence>
<evidence type="ECO:0000256" key="2">
    <source>
        <dbReference type="SAM" id="MobiDB-lite"/>
    </source>
</evidence>
<feature type="chain" id="PRO_1000119659" description="Chaperone protein DnaK">
    <location>
        <begin position="1"/>
        <end position="633"/>
    </location>
</feature>
<feature type="region of interest" description="Disordered" evidence="2">
    <location>
        <begin position="599"/>
        <end position="633"/>
    </location>
</feature>
<feature type="compositionally biased region" description="Low complexity" evidence="2">
    <location>
        <begin position="599"/>
        <end position="613"/>
    </location>
</feature>
<feature type="modified residue" description="Phosphothreonine; by autocatalysis" evidence="1">
    <location>
        <position position="198"/>
    </location>
</feature>
<sequence length="633" mass="68039">MGKIIGIDLGTTNSCVAVMDGDKARVIENAEGARTTPSIIAYTDNETLVGQPAKRQAITNPKNTLFAIKRLIGRRFESEEVQRDIKIMPFEITRADNGDAWVNVKGDKLAPPQISAEVLKKMKKTAEDFLGEAVTEAVITVPAYFNDAQRQATIDAGRIAGLDVKRIINEPTAAALAFGLGSTKENQVIAVYDLGGGTFDISIIEIDNFDGEQTFEVLATGGNTHLGGEDFDNRVIDYIIDEFKKEQGVDLRNDPMALQRVKEAAEKAKIELSSAQSTEVNLPYITADATGPKHLAINVTRAKLEALVEDLVASSIESLKTVLKDAGKSVNEINDIILVGGQTRMPLVQQKVAEFFGKEARKDVNPDEAVAIGAAVQGGVLKGDVKDVLLLDVTPLSLGIETMGGVMTVLIEKNTTIPTKKSQVFSTAEDNQSAVTIHVLQGERKQASANKSLGQFNLEGINPAPRGMPQIEVTFDIDANGVINVSAKDKNTGKEQQIRIQASSGLSDEEIEQMVRDAEANAEADKKFEELVQARNQADGIAHATRKQIEEAGDALNADDKAKIEAAIADLEKAAKGDDKAEIDAKTEALIKASEPLMQAAQAKAQQAGGEQPQAKKDDGVVDAEFEEVKDNK</sequence>
<name>DNAK_ACTPJ</name>
<reference key="1">
    <citation type="journal article" date="2008" name="PLoS ONE">
        <title>Genome biology of Actinobacillus pleuropneumoniae JL03, an isolate of serotype 3 prevalent in China.</title>
        <authorList>
            <person name="Xu Z."/>
            <person name="Zhou Y."/>
            <person name="Li L."/>
            <person name="Zhou R."/>
            <person name="Xiao S."/>
            <person name="Wan Y."/>
            <person name="Zhang S."/>
            <person name="Wang K."/>
            <person name="Li W."/>
            <person name="Li L."/>
            <person name="Jin H."/>
            <person name="Kang M."/>
            <person name="Dalai B."/>
            <person name="Li T."/>
            <person name="Liu L."/>
            <person name="Cheng Y."/>
            <person name="Zhang L."/>
            <person name="Xu T."/>
            <person name="Zheng H."/>
            <person name="Pu S."/>
            <person name="Wang B."/>
            <person name="Gu W."/>
            <person name="Zhang X.L."/>
            <person name="Zhu G.-F."/>
            <person name="Wang S."/>
            <person name="Zhao G.-P."/>
            <person name="Chen H."/>
        </authorList>
    </citation>
    <scope>NUCLEOTIDE SEQUENCE [LARGE SCALE GENOMIC DNA]</scope>
    <source>
        <strain>JL03</strain>
    </source>
</reference>